<protein>
    <recommendedName>
        <fullName evidence="1">Photosystem I assembly protein Ycf3</fullName>
    </recommendedName>
</protein>
<keyword id="KW-0472">Membrane</keyword>
<keyword id="KW-0602">Photosynthesis</keyword>
<keyword id="KW-1185">Reference proteome</keyword>
<keyword id="KW-0677">Repeat</keyword>
<keyword id="KW-0793">Thylakoid</keyword>
<keyword id="KW-0802">TPR repeat</keyword>
<feature type="chain" id="PRO_1000200325" description="Photosystem I assembly protein Ycf3">
    <location>
        <begin position="1"/>
        <end position="173"/>
    </location>
</feature>
<feature type="repeat" description="TPR 1">
    <location>
        <begin position="35"/>
        <end position="68"/>
    </location>
</feature>
<feature type="repeat" description="TPR 2">
    <location>
        <begin position="72"/>
        <end position="105"/>
    </location>
</feature>
<feature type="repeat" description="TPR 3">
    <location>
        <begin position="120"/>
        <end position="153"/>
    </location>
</feature>
<organism>
    <name type="scientific">Prochlorococcus marinus (strain MIT 9211)</name>
    <dbReference type="NCBI Taxonomy" id="93059"/>
    <lineage>
        <taxon>Bacteria</taxon>
        <taxon>Bacillati</taxon>
        <taxon>Cyanobacteriota</taxon>
        <taxon>Cyanophyceae</taxon>
        <taxon>Synechococcales</taxon>
        <taxon>Prochlorococcaceae</taxon>
        <taxon>Prochlorococcus</taxon>
    </lineage>
</organism>
<dbReference type="EMBL" id="CP000878">
    <property type="protein sequence ID" value="ABX08077.1"/>
    <property type="molecule type" value="Genomic_DNA"/>
</dbReference>
<dbReference type="RefSeq" id="WP_012194702.1">
    <property type="nucleotide sequence ID" value="NC_009976.1"/>
</dbReference>
<dbReference type="SMR" id="A9BCY9"/>
<dbReference type="STRING" id="93059.P9211_01461"/>
<dbReference type="KEGG" id="pmj:P9211_01461"/>
<dbReference type="eggNOG" id="COG3063">
    <property type="taxonomic scope" value="Bacteria"/>
</dbReference>
<dbReference type="HOGENOM" id="CLU_141248_0_0_3"/>
<dbReference type="OrthoDB" id="9429505at2"/>
<dbReference type="Proteomes" id="UP000000788">
    <property type="component" value="Chromosome"/>
</dbReference>
<dbReference type="GO" id="GO:0031676">
    <property type="term" value="C:plasma membrane-derived thylakoid membrane"/>
    <property type="evidence" value="ECO:0007669"/>
    <property type="project" value="UniProtKB-SubCell"/>
</dbReference>
<dbReference type="GO" id="GO:0015979">
    <property type="term" value="P:photosynthesis"/>
    <property type="evidence" value="ECO:0007669"/>
    <property type="project" value="UniProtKB-UniRule"/>
</dbReference>
<dbReference type="Gene3D" id="1.25.40.10">
    <property type="entry name" value="Tetratricopeptide repeat domain"/>
    <property type="match status" value="1"/>
</dbReference>
<dbReference type="HAMAP" id="MF_00439">
    <property type="entry name" value="Ycf3"/>
    <property type="match status" value="1"/>
</dbReference>
<dbReference type="InterPro" id="IPR022818">
    <property type="entry name" value="PSI_Ycf3_assembly"/>
</dbReference>
<dbReference type="InterPro" id="IPR011990">
    <property type="entry name" value="TPR-like_helical_dom_sf"/>
</dbReference>
<dbReference type="InterPro" id="IPR019734">
    <property type="entry name" value="TPR_rpt"/>
</dbReference>
<dbReference type="InterPro" id="IPR051685">
    <property type="entry name" value="Ycf3/AcsC/BcsC/TPR_MFPF"/>
</dbReference>
<dbReference type="NCBIfam" id="NF002725">
    <property type="entry name" value="PRK02603.1"/>
    <property type="match status" value="1"/>
</dbReference>
<dbReference type="PANTHER" id="PTHR44943">
    <property type="entry name" value="CELLULOSE SYNTHASE OPERON PROTEIN C"/>
    <property type="match status" value="1"/>
</dbReference>
<dbReference type="PANTHER" id="PTHR44943:SF8">
    <property type="entry name" value="TPR REPEAT-CONTAINING PROTEIN MJ0263"/>
    <property type="match status" value="1"/>
</dbReference>
<dbReference type="Pfam" id="PF13424">
    <property type="entry name" value="TPR_12"/>
    <property type="match status" value="1"/>
</dbReference>
<dbReference type="SMART" id="SM00028">
    <property type="entry name" value="TPR"/>
    <property type="match status" value="3"/>
</dbReference>
<dbReference type="SUPFAM" id="SSF48452">
    <property type="entry name" value="TPR-like"/>
    <property type="match status" value="1"/>
</dbReference>
<dbReference type="PROSITE" id="PS50005">
    <property type="entry name" value="TPR"/>
    <property type="match status" value="2"/>
</dbReference>
<dbReference type="PROSITE" id="PS50293">
    <property type="entry name" value="TPR_REGION"/>
    <property type="match status" value="1"/>
</dbReference>
<name>YCF3_PROM4</name>
<comment type="function">
    <text evidence="1">Essential for the assembly of the photosystem I (PSI) complex. May act as a chaperone-like factor to guide the assembly of the PSI subunits.</text>
</comment>
<comment type="subcellular location">
    <subcellularLocation>
        <location evidence="1">Cellular thylakoid membrane</location>
        <topology evidence="1">Peripheral membrane protein</topology>
    </subcellularLocation>
</comment>
<comment type="similarity">
    <text evidence="1">Belongs to the Ycf3 family.</text>
</comment>
<gene>
    <name evidence="1" type="primary">ycf3</name>
    <name type="ordered locus">P9211_01461</name>
</gene>
<sequence>MPSSNNKDNFLDKAFTVIAEGIVKMMPIAAKEKQAYIYYREGFAAQNNGDYSEALENYEESLKLEENPVDRGETLKNMAIIYMSNGDEDRALETYVKALDQNPKQPSCLKNMGLIYEKRGRSAQQRGLQDESDIWFDKAADVWTKAVRLYPGGYLDIENWLKTTGRSKIDVYL</sequence>
<evidence type="ECO:0000255" key="1">
    <source>
        <dbReference type="HAMAP-Rule" id="MF_00439"/>
    </source>
</evidence>
<proteinExistence type="inferred from homology"/>
<accession>A9BCY9</accession>
<reference key="1">
    <citation type="journal article" date="2007" name="PLoS Genet.">
        <title>Patterns and implications of gene gain and loss in the evolution of Prochlorococcus.</title>
        <authorList>
            <person name="Kettler G.C."/>
            <person name="Martiny A.C."/>
            <person name="Huang K."/>
            <person name="Zucker J."/>
            <person name="Coleman M.L."/>
            <person name="Rodrigue S."/>
            <person name="Chen F."/>
            <person name="Lapidus A."/>
            <person name="Ferriera S."/>
            <person name="Johnson J."/>
            <person name="Steglich C."/>
            <person name="Church G.M."/>
            <person name="Richardson P."/>
            <person name="Chisholm S.W."/>
        </authorList>
    </citation>
    <scope>NUCLEOTIDE SEQUENCE [LARGE SCALE GENOMIC DNA]</scope>
    <source>
        <strain>MIT 9211</strain>
    </source>
</reference>